<keyword id="KW-0963">Cytoplasm</keyword>
<keyword id="KW-0227">DNA damage</keyword>
<keyword id="KW-0234">DNA repair</keyword>
<keyword id="KW-0235">DNA replication</keyword>
<keyword id="KW-0238">DNA-binding</keyword>
<keyword id="KW-0239">DNA-directed DNA polymerase</keyword>
<keyword id="KW-0460">Magnesium</keyword>
<keyword id="KW-0479">Metal-binding</keyword>
<keyword id="KW-0515">Mutator protein</keyword>
<keyword id="KW-0548">Nucleotidyltransferase</keyword>
<keyword id="KW-0808">Transferase</keyword>
<sequence length="438" mass="48490">MAAPVNNPDHGFCRDCLTFQRSETRRCERCGSPRLARHPELYRLHLAHIDCDAFYAAIEKRDNPALKDKPLIIGGGKRGVVSTACYIARIRGVRSAMPMFKALEACPEAVVIPPNMEKYVRVGREVRAMMQTLTPLVEPLSIDEAFLDFAGTERLHGQPPAVVLARFALAVEKEIGITVSAGLSYCKFLAKIASDFRKPRGFSVIGEAEAVGFLATKPVTMIWGVGKAFNATLERDGIRTIGQLQTMERGDLMRRYGVMGDRLYRLSRGEDVRRVDPDQDAKSVSAETTFDTDIASLDELVSVLRGLSEKVSARLKKSGIAGRTVVLKLKTQDFKLRTRNRQLGDPTRLADRIFQAGVELLRKETDGTKFRLLGIGVSDLSDDDKADPPDLVDVQSRKRAMAEGAIDALRDKFGRKAVETGYTFGRGRDAHPPEPLED</sequence>
<reference key="1">
    <citation type="journal article" date="2000" name="DNA Res.">
        <title>Complete genome structure of the nitrogen-fixing symbiotic bacterium Mesorhizobium loti.</title>
        <authorList>
            <person name="Kaneko T."/>
            <person name="Nakamura Y."/>
            <person name="Sato S."/>
            <person name="Asamizu E."/>
            <person name="Kato T."/>
            <person name="Sasamoto S."/>
            <person name="Watanabe A."/>
            <person name="Idesawa K."/>
            <person name="Ishikawa A."/>
            <person name="Kawashima K."/>
            <person name="Kimura T."/>
            <person name="Kishida Y."/>
            <person name="Kiyokawa C."/>
            <person name="Kohara M."/>
            <person name="Matsumoto M."/>
            <person name="Matsuno A."/>
            <person name="Mochizuki Y."/>
            <person name="Nakayama S."/>
            <person name="Nakazaki N."/>
            <person name="Shimpo S."/>
            <person name="Sugimoto M."/>
            <person name="Takeuchi C."/>
            <person name="Yamada M."/>
            <person name="Tabata S."/>
        </authorList>
    </citation>
    <scope>NUCLEOTIDE SEQUENCE [LARGE SCALE GENOMIC DNA]</scope>
    <source>
        <strain>LMG 29417 / CECT 9101 / MAFF 303099</strain>
    </source>
</reference>
<dbReference type="EC" id="2.7.7.7"/>
<dbReference type="EMBL" id="BA000012">
    <property type="protein sequence ID" value="BAB48362.1"/>
    <property type="molecule type" value="Genomic_DNA"/>
</dbReference>
<dbReference type="SMR" id="Q98LV1"/>
<dbReference type="KEGG" id="mlo:mlr0866"/>
<dbReference type="eggNOG" id="COG0389">
    <property type="taxonomic scope" value="Bacteria"/>
</dbReference>
<dbReference type="HOGENOM" id="CLU_012348_1_0_5"/>
<dbReference type="Proteomes" id="UP000000552">
    <property type="component" value="Chromosome"/>
</dbReference>
<dbReference type="GO" id="GO:0005829">
    <property type="term" value="C:cytosol"/>
    <property type="evidence" value="ECO:0007669"/>
    <property type="project" value="TreeGrafter"/>
</dbReference>
<dbReference type="GO" id="GO:0003684">
    <property type="term" value="F:damaged DNA binding"/>
    <property type="evidence" value="ECO:0007669"/>
    <property type="project" value="InterPro"/>
</dbReference>
<dbReference type="GO" id="GO:0003887">
    <property type="term" value="F:DNA-directed DNA polymerase activity"/>
    <property type="evidence" value="ECO:0007669"/>
    <property type="project" value="UniProtKB-UniRule"/>
</dbReference>
<dbReference type="GO" id="GO:0000287">
    <property type="term" value="F:magnesium ion binding"/>
    <property type="evidence" value="ECO:0007669"/>
    <property type="project" value="UniProtKB-UniRule"/>
</dbReference>
<dbReference type="GO" id="GO:0006261">
    <property type="term" value="P:DNA-templated DNA replication"/>
    <property type="evidence" value="ECO:0007669"/>
    <property type="project" value="UniProtKB-UniRule"/>
</dbReference>
<dbReference type="GO" id="GO:0042276">
    <property type="term" value="P:error-prone translesion synthesis"/>
    <property type="evidence" value="ECO:0007669"/>
    <property type="project" value="TreeGrafter"/>
</dbReference>
<dbReference type="GO" id="GO:0009432">
    <property type="term" value="P:SOS response"/>
    <property type="evidence" value="ECO:0007669"/>
    <property type="project" value="TreeGrafter"/>
</dbReference>
<dbReference type="CDD" id="cd03586">
    <property type="entry name" value="PolY_Pol_IV_kappa"/>
    <property type="match status" value="1"/>
</dbReference>
<dbReference type="FunFam" id="3.30.1490.100:FF:000004">
    <property type="entry name" value="DNA polymerase IV"/>
    <property type="match status" value="1"/>
</dbReference>
<dbReference type="FunFam" id="3.40.1170.60:FF:000001">
    <property type="entry name" value="DNA polymerase IV"/>
    <property type="match status" value="1"/>
</dbReference>
<dbReference type="Gene3D" id="3.30.70.270">
    <property type="match status" value="1"/>
</dbReference>
<dbReference type="Gene3D" id="3.40.1170.60">
    <property type="match status" value="1"/>
</dbReference>
<dbReference type="Gene3D" id="1.10.150.20">
    <property type="entry name" value="5' to 3' exonuclease, C-terminal subdomain"/>
    <property type="match status" value="1"/>
</dbReference>
<dbReference type="Gene3D" id="3.30.1490.100">
    <property type="entry name" value="DNA polymerase, Y-family, little finger domain"/>
    <property type="match status" value="1"/>
</dbReference>
<dbReference type="HAMAP" id="MF_01113">
    <property type="entry name" value="DNApol_IV"/>
    <property type="match status" value="1"/>
</dbReference>
<dbReference type="InterPro" id="IPR043502">
    <property type="entry name" value="DNA/RNA_pol_sf"/>
</dbReference>
<dbReference type="InterPro" id="IPR036775">
    <property type="entry name" value="DNA_pol_Y-fam_lit_finger_sf"/>
</dbReference>
<dbReference type="InterPro" id="IPR017961">
    <property type="entry name" value="DNA_pol_Y-fam_little_finger"/>
</dbReference>
<dbReference type="InterPro" id="IPR050116">
    <property type="entry name" value="DNA_polymerase-Y"/>
</dbReference>
<dbReference type="InterPro" id="IPR022880">
    <property type="entry name" value="DNApol_IV"/>
</dbReference>
<dbReference type="InterPro" id="IPR053848">
    <property type="entry name" value="IMS_HHH_1"/>
</dbReference>
<dbReference type="InterPro" id="IPR043128">
    <property type="entry name" value="Rev_trsase/Diguanyl_cyclase"/>
</dbReference>
<dbReference type="InterPro" id="IPR001126">
    <property type="entry name" value="UmuC"/>
</dbReference>
<dbReference type="NCBIfam" id="NF002677">
    <property type="entry name" value="PRK02406.1"/>
    <property type="match status" value="1"/>
</dbReference>
<dbReference type="NCBIfam" id="NF002751">
    <property type="entry name" value="PRK02794.1"/>
    <property type="match status" value="1"/>
</dbReference>
<dbReference type="PANTHER" id="PTHR11076:SF33">
    <property type="entry name" value="DNA POLYMERASE KAPPA"/>
    <property type="match status" value="1"/>
</dbReference>
<dbReference type="PANTHER" id="PTHR11076">
    <property type="entry name" value="DNA REPAIR POLYMERASE UMUC / TRANSFERASE FAMILY MEMBER"/>
    <property type="match status" value="1"/>
</dbReference>
<dbReference type="Pfam" id="PF00817">
    <property type="entry name" value="IMS"/>
    <property type="match status" value="1"/>
</dbReference>
<dbReference type="Pfam" id="PF11799">
    <property type="entry name" value="IMS_C"/>
    <property type="match status" value="1"/>
</dbReference>
<dbReference type="Pfam" id="PF21999">
    <property type="entry name" value="IMS_HHH_1"/>
    <property type="match status" value="1"/>
</dbReference>
<dbReference type="SUPFAM" id="SSF56672">
    <property type="entry name" value="DNA/RNA polymerases"/>
    <property type="match status" value="1"/>
</dbReference>
<dbReference type="SUPFAM" id="SSF100879">
    <property type="entry name" value="Lesion bypass DNA polymerase (Y-family), little finger domain"/>
    <property type="match status" value="1"/>
</dbReference>
<dbReference type="PROSITE" id="PS50173">
    <property type="entry name" value="UMUC"/>
    <property type="match status" value="1"/>
</dbReference>
<name>DPO41_RHILO</name>
<proteinExistence type="inferred from homology"/>
<organism>
    <name type="scientific">Mesorhizobium japonicum (strain LMG 29417 / CECT 9101 / MAFF 303099)</name>
    <name type="common">Mesorhizobium loti (strain MAFF 303099)</name>
    <dbReference type="NCBI Taxonomy" id="266835"/>
    <lineage>
        <taxon>Bacteria</taxon>
        <taxon>Pseudomonadati</taxon>
        <taxon>Pseudomonadota</taxon>
        <taxon>Alphaproteobacteria</taxon>
        <taxon>Hyphomicrobiales</taxon>
        <taxon>Phyllobacteriaceae</taxon>
        <taxon>Mesorhizobium</taxon>
    </lineage>
</organism>
<protein>
    <recommendedName>
        <fullName>DNA polymerase IV 1</fullName>
        <shortName>Pol IV 1</shortName>
        <ecNumber>2.7.7.7</ecNumber>
    </recommendedName>
</protein>
<feature type="chain" id="PRO_0000173936" description="DNA polymerase IV 1">
    <location>
        <begin position="1"/>
        <end position="438"/>
    </location>
</feature>
<feature type="domain" description="UmuC">
    <location>
        <begin position="46"/>
        <end position="226"/>
    </location>
</feature>
<feature type="active site" evidence="1">
    <location>
        <position position="144"/>
    </location>
</feature>
<feature type="binding site" evidence="1">
    <location>
        <position position="50"/>
    </location>
    <ligand>
        <name>Mg(2+)</name>
        <dbReference type="ChEBI" id="CHEBI:18420"/>
    </ligand>
</feature>
<feature type="binding site" evidence="1">
    <location>
        <position position="143"/>
    </location>
    <ligand>
        <name>Mg(2+)</name>
        <dbReference type="ChEBI" id="CHEBI:18420"/>
    </ligand>
</feature>
<feature type="site" description="Substrate discrimination" evidence="1">
    <location>
        <position position="55"/>
    </location>
</feature>
<gene>
    <name type="primary">dinB1</name>
    <name type="ordered locus">mlr0866</name>
</gene>
<evidence type="ECO:0000250" key="1"/>
<evidence type="ECO:0000305" key="2"/>
<accession>Q98LV1</accession>
<comment type="function">
    <text evidence="1">Poorly processive, error-prone DNA polymerase involved in untargeted mutagenesis. Copies undamaged DNA at stalled replication forks, which arise in vivo from mismatched or misaligned primer ends. These misaligned primers can be extended by PolIV. Exhibits no 3'-5' exonuclease (proofreading) activity. May be involved in translesional synthesis, in conjunction with the beta clamp from PolIII (By similarity).</text>
</comment>
<comment type="catalytic activity">
    <reaction>
        <text>DNA(n) + a 2'-deoxyribonucleoside 5'-triphosphate = DNA(n+1) + diphosphate</text>
        <dbReference type="Rhea" id="RHEA:22508"/>
        <dbReference type="Rhea" id="RHEA-COMP:17339"/>
        <dbReference type="Rhea" id="RHEA-COMP:17340"/>
        <dbReference type="ChEBI" id="CHEBI:33019"/>
        <dbReference type="ChEBI" id="CHEBI:61560"/>
        <dbReference type="ChEBI" id="CHEBI:173112"/>
        <dbReference type="EC" id="2.7.7.7"/>
    </reaction>
</comment>
<comment type="cofactor">
    <cofactor evidence="1">
        <name>Mg(2+)</name>
        <dbReference type="ChEBI" id="CHEBI:18420"/>
    </cofactor>
    <text evidence="1">Binds 2 magnesium ions per subunit.</text>
</comment>
<comment type="subunit">
    <text evidence="1">Monomer.</text>
</comment>
<comment type="subcellular location">
    <subcellularLocation>
        <location evidence="1">Cytoplasm</location>
    </subcellularLocation>
</comment>
<comment type="similarity">
    <text evidence="2">Belongs to the DNA polymerase type-Y family.</text>
</comment>